<gene>
    <name type="ordered locus">SA0370</name>
</gene>
<accession>P60855</accession>
<accession>Q99WJ4</accession>
<organism>
    <name type="scientific">Staphylococcus aureus (strain N315)</name>
    <dbReference type="NCBI Taxonomy" id="158879"/>
    <lineage>
        <taxon>Bacteria</taxon>
        <taxon>Bacillati</taxon>
        <taxon>Bacillota</taxon>
        <taxon>Bacilli</taxon>
        <taxon>Bacillales</taxon>
        <taxon>Staphylococcaceae</taxon>
        <taxon>Staphylococcus</taxon>
    </lineage>
</organism>
<name>Y370_STAAN</name>
<evidence type="ECO:0000255" key="1"/>
<evidence type="ECO:0000256" key="2">
    <source>
        <dbReference type="SAM" id="MobiDB-lite"/>
    </source>
</evidence>
<keyword id="KW-0175">Coiled coil</keyword>
<proteinExistence type="evidence at protein level"/>
<reference key="1">
    <citation type="journal article" date="2001" name="Lancet">
        <title>Whole genome sequencing of meticillin-resistant Staphylococcus aureus.</title>
        <authorList>
            <person name="Kuroda M."/>
            <person name="Ohta T."/>
            <person name="Uchiyama I."/>
            <person name="Baba T."/>
            <person name="Yuzawa H."/>
            <person name="Kobayashi I."/>
            <person name="Cui L."/>
            <person name="Oguchi A."/>
            <person name="Aoki K."/>
            <person name="Nagai Y."/>
            <person name="Lian J.-Q."/>
            <person name="Ito T."/>
            <person name="Kanamori M."/>
            <person name="Matsumaru H."/>
            <person name="Maruyama A."/>
            <person name="Murakami H."/>
            <person name="Hosoyama A."/>
            <person name="Mizutani-Ui Y."/>
            <person name="Takahashi N.K."/>
            <person name="Sawano T."/>
            <person name="Inoue R."/>
            <person name="Kaito C."/>
            <person name="Sekimizu K."/>
            <person name="Hirakawa H."/>
            <person name="Kuhara S."/>
            <person name="Goto S."/>
            <person name="Yabuzaki J."/>
            <person name="Kanehisa M."/>
            <person name="Yamashita A."/>
            <person name="Oshima K."/>
            <person name="Furuya K."/>
            <person name="Yoshino C."/>
            <person name="Shiba T."/>
            <person name="Hattori M."/>
            <person name="Ogasawara N."/>
            <person name="Hayashi H."/>
            <person name="Hiramatsu K."/>
        </authorList>
    </citation>
    <scope>NUCLEOTIDE SEQUENCE [LARGE SCALE GENOMIC DNA]</scope>
    <source>
        <strain>N315</strain>
    </source>
</reference>
<reference key="2">
    <citation type="journal article" date="2005" name="J. Microbiol. Methods">
        <title>Correlation of proteomic and transcriptomic profiles of Staphylococcus aureus during the post-exponential phase of growth.</title>
        <authorList>
            <person name="Scherl A."/>
            <person name="Francois P."/>
            <person name="Bento M."/>
            <person name="Deshusses J.M."/>
            <person name="Charbonnier Y."/>
            <person name="Converset V."/>
            <person name="Huyghe A."/>
            <person name="Walter N."/>
            <person name="Hoogland C."/>
            <person name="Appel R.D."/>
            <person name="Sanchez J.-C."/>
            <person name="Zimmermann-Ivol C.G."/>
            <person name="Corthals G.L."/>
            <person name="Hochstrasser D.F."/>
            <person name="Schrenzel J."/>
        </authorList>
    </citation>
    <scope>IDENTIFICATION BY MASS SPECTROMETRY</scope>
    <source>
        <strain>N315</strain>
    </source>
</reference>
<reference key="3">
    <citation type="submission" date="2007-10" db="UniProtKB">
        <title>Shotgun proteomic analysis of total and membrane protein extracts of S. aureus strain N315.</title>
        <authorList>
            <person name="Vaezzadeh A.R."/>
            <person name="Deshusses J."/>
            <person name="Lescuyer P."/>
            <person name="Hochstrasser D.F."/>
        </authorList>
    </citation>
    <scope>IDENTIFICATION BY MASS SPECTROMETRY [LARGE SCALE ANALYSIS]</scope>
    <source>
        <strain>N315</strain>
    </source>
</reference>
<sequence>MLTKEFAQRVELSEKQVRKIVQHLEERGYQLSKTEYRGREATDFKEEDIELFKDIADKVKQTNSYDLAFDELEKEKDFLQVIVKNDDKNLPTNQNVAQLVEDLRLEIQKMREERHLLGQMMNQVHQQQQELKELQNQLTSKIDSNSESLKAIQTSQEAIQEAQASQAKVLAESTNKVEKNAVTEDKADSKDSKVAGVNTSTDAKTDTKAENAGDGTATKVDKEDQISATEAIEKASVEQSKNENAAETSNKEATVDADAQHDAEQQVAEAHAEASKQATSNDSLEAKAENDSTASQSEMSEPKPQEEKKGFFARLFNL</sequence>
<feature type="chain" id="PRO_0000215533" description="Uncharacterized protein SA0370">
    <location>
        <begin position="1"/>
        <end position="318"/>
    </location>
</feature>
<feature type="region of interest" description="Disordered" evidence="2">
    <location>
        <begin position="172"/>
        <end position="318"/>
    </location>
</feature>
<feature type="coiled-coil region" evidence="1">
    <location>
        <begin position="67"/>
        <end position="157"/>
    </location>
</feature>
<feature type="compositionally biased region" description="Basic and acidic residues" evidence="2">
    <location>
        <begin position="175"/>
        <end position="193"/>
    </location>
</feature>
<feature type="compositionally biased region" description="Basic and acidic residues" evidence="2">
    <location>
        <begin position="219"/>
        <end position="236"/>
    </location>
</feature>
<feature type="compositionally biased region" description="Polar residues" evidence="2">
    <location>
        <begin position="237"/>
        <end position="248"/>
    </location>
</feature>
<feature type="compositionally biased region" description="Basic and acidic residues" evidence="2">
    <location>
        <begin position="249"/>
        <end position="274"/>
    </location>
</feature>
<feature type="compositionally biased region" description="Basic and acidic residues" evidence="2">
    <location>
        <begin position="300"/>
        <end position="310"/>
    </location>
</feature>
<dbReference type="EMBL" id="BA000018">
    <property type="protein sequence ID" value="BAB41597.1"/>
    <property type="molecule type" value="Genomic_DNA"/>
</dbReference>
<dbReference type="PIR" id="B89805">
    <property type="entry name" value="B89805"/>
</dbReference>
<dbReference type="RefSeq" id="WP_000956137.1">
    <property type="nucleotide sequence ID" value="NC_002745.2"/>
</dbReference>
<dbReference type="SMR" id="P60855"/>
<dbReference type="EnsemblBacteria" id="BAB41597">
    <property type="protein sequence ID" value="BAB41597"/>
    <property type="gene ID" value="BAB41597"/>
</dbReference>
<dbReference type="KEGG" id="sau:SA0370"/>
<dbReference type="HOGENOM" id="CLU_885403_0_0_9"/>
<protein>
    <recommendedName>
        <fullName>Uncharacterized protein SA0370</fullName>
    </recommendedName>
</protein>